<dbReference type="EMBL" id="CP000826">
    <property type="protein sequence ID" value="ABV40741.1"/>
    <property type="molecule type" value="Genomic_DNA"/>
</dbReference>
<dbReference type="SMR" id="A8GCA1"/>
<dbReference type="STRING" id="399741.Spro_1637"/>
<dbReference type="MEROPS" id="I11.001"/>
<dbReference type="KEGG" id="spe:Spro_1637"/>
<dbReference type="eggNOG" id="COG4574">
    <property type="taxonomic scope" value="Bacteria"/>
</dbReference>
<dbReference type="HOGENOM" id="CLU_111565_0_0_6"/>
<dbReference type="OrthoDB" id="997196at2"/>
<dbReference type="GO" id="GO:0042597">
    <property type="term" value="C:periplasmic space"/>
    <property type="evidence" value="ECO:0007669"/>
    <property type="project" value="UniProtKB-SubCell"/>
</dbReference>
<dbReference type="GO" id="GO:0004867">
    <property type="term" value="F:serine-type endopeptidase inhibitor activity"/>
    <property type="evidence" value="ECO:0007669"/>
    <property type="project" value="UniProtKB-UniRule"/>
</dbReference>
<dbReference type="CDD" id="cd00242">
    <property type="entry name" value="Ecotin"/>
    <property type="match status" value="1"/>
</dbReference>
<dbReference type="Gene3D" id="2.60.40.550">
    <property type="entry name" value="Ecotin"/>
    <property type="match status" value="1"/>
</dbReference>
<dbReference type="Gene3D" id="4.10.1230.10">
    <property type="entry name" value="Ecotin, trypsin inhibitor"/>
    <property type="match status" value="1"/>
</dbReference>
<dbReference type="HAMAP" id="MF_00706">
    <property type="entry name" value="Ecotin"/>
    <property type="match status" value="1"/>
</dbReference>
<dbReference type="InterPro" id="IPR027438">
    <property type="entry name" value="Ecotin_C"/>
</dbReference>
<dbReference type="InterPro" id="IPR036198">
    <property type="entry name" value="Ecotin_sf"/>
</dbReference>
<dbReference type="InterPro" id="IPR005658">
    <property type="entry name" value="Prot_inh_ecotin"/>
</dbReference>
<dbReference type="InterPro" id="IPR023084">
    <property type="entry name" value="Prot_inh_ecotin_gammaproteobac"/>
</dbReference>
<dbReference type="NCBIfam" id="NF002987">
    <property type="entry name" value="PRK03719.1"/>
    <property type="match status" value="1"/>
</dbReference>
<dbReference type="PANTHER" id="PTHR35890">
    <property type="match status" value="1"/>
</dbReference>
<dbReference type="PANTHER" id="PTHR35890:SF3">
    <property type="entry name" value="ECOTIN"/>
    <property type="match status" value="1"/>
</dbReference>
<dbReference type="Pfam" id="PF03974">
    <property type="entry name" value="Ecotin"/>
    <property type="match status" value="1"/>
</dbReference>
<dbReference type="PIRSF" id="PIRSF006865">
    <property type="entry name" value="Prot_inh_ecotin"/>
    <property type="match status" value="1"/>
</dbReference>
<dbReference type="SUPFAM" id="SSF49772">
    <property type="entry name" value="Ecotin, trypsin inhibitor"/>
    <property type="match status" value="1"/>
</dbReference>
<feature type="signal peptide" evidence="1">
    <location>
        <begin position="1"/>
        <end position="21"/>
    </location>
</feature>
<feature type="chain" id="PRO_5000279229" description="Ecotin">
    <location>
        <begin position="22"/>
        <end position="170"/>
    </location>
</feature>
<feature type="site" description="Reactive bond" evidence="1">
    <location>
        <begin position="112"/>
        <end position="113"/>
    </location>
</feature>
<feature type="disulfide bond" evidence="1">
    <location>
        <begin position="78"/>
        <end position="115"/>
    </location>
</feature>
<sequence>MNKASVVFSGLLMAVSASAIAATSSEDTDISKQPLEKVAPYPKAEKGMSRQVIYLPKQEHEENFKVELLIGKTLEVDCNRHMIGGTLETKTLSGWGYDYLVVEKLSEPASTMMACPDNTKQQKFIAANLGDAAMQRYNSRLPIVVYAPKDVEVKYRVWKAEDTVSKAEQK</sequence>
<gene>
    <name evidence="1" type="primary">eco</name>
    <name type="ordered locus">Spro_1637</name>
</gene>
<comment type="function">
    <text evidence="1">General inhibitor of pancreatic serine proteases: inhibits chymotrypsin, trypsin, elastases, factor X, kallikrein as well as a variety of other proteases.</text>
</comment>
<comment type="subunit">
    <text evidence="1">Homodimer.</text>
</comment>
<comment type="subcellular location">
    <subcellularLocation>
        <location evidence="1">Periplasm</location>
    </subcellularLocation>
</comment>
<comment type="similarity">
    <text evidence="1">Belongs to the protease inhibitor I11 (ecotin) family.</text>
</comment>
<proteinExistence type="inferred from homology"/>
<keyword id="KW-1015">Disulfide bond</keyword>
<keyword id="KW-0574">Periplasm</keyword>
<keyword id="KW-0646">Protease inhibitor</keyword>
<keyword id="KW-0722">Serine protease inhibitor</keyword>
<keyword id="KW-0732">Signal</keyword>
<protein>
    <recommendedName>
        <fullName evidence="1">Ecotin</fullName>
    </recommendedName>
</protein>
<name>ECOT_SERP5</name>
<evidence type="ECO:0000255" key="1">
    <source>
        <dbReference type="HAMAP-Rule" id="MF_00706"/>
    </source>
</evidence>
<reference key="1">
    <citation type="submission" date="2007-09" db="EMBL/GenBank/DDBJ databases">
        <title>Complete sequence of chromosome of Serratia proteamaculans 568.</title>
        <authorList>
            <consortium name="US DOE Joint Genome Institute"/>
            <person name="Copeland A."/>
            <person name="Lucas S."/>
            <person name="Lapidus A."/>
            <person name="Barry K."/>
            <person name="Glavina del Rio T."/>
            <person name="Dalin E."/>
            <person name="Tice H."/>
            <person name="Pitluck S."/>
            <person name="Chain P."/>
            <person name="Malfatti S."/>
            <person name="Shin M."/>
            <person name="Vergez L."/>
            <person name="Schmutz J."/>
            <person name="Larimer F."/>
            <person name="Land M."/>
            <person name="Hauser L."/>
            <person name="Kyrpides N."/>
            <person name="Kim E."/>
            <person name="Taghavi S."/>
            <person name="Newman L."/>
            <person name="Vangronsveld J."/>
            <person name="van der Lelie D."/>
            <person name="Richardson P."/>
        </authorList>
    </citation>
    <scope>NUCLEOTIDE SEQUENCE [LARGE SCALE GENOMIC DNA]</scope>
    <source>
        <strain>568</strain>
    </source>
</reference>
<accession>A8GCA1</accession>
<organism>
    <name type="scientific">Serratia proteamaculans (strain 568)</name>
    <dbReference type="NCBI Taxonomy" id="399741"/>
    <lineage>
        <taxon>Bacteria</taxon>
        <taxon>Pseudomonadati</taxon>
        <taxon>Pseudomonadota</taxon>
        <taxon>Gammaproteobacteria</taxon>
        <taxon>Enterobacterales</taxon>
        <taxon>Yersiniaceae</taxon>
        <taxon>Serratia</taxon>
    </lineage>
</organism>